<sequence>MENRSLVTIAEHSREKILYMLEMAKQFEKNPNRRLLEGKVVATLFFEPSTRTRLSFETAANRLGARVIGFSDPKATSSSKGETLKDTIMMVSNYADVIVMRHYLEGAARYASEVAPVPIVNAGDGANQHPSQTMLDLYSIYKTQGTLENLNIYLVGDLKYGRTVHSLLMAMRHFNPTFHFIAPEELKMPEEYKIYCKEHNIKYVEHTDFNEEVIKDADILYMTRVQRERFTDLMEYERVKNVYILKAKMLENTRSNLRILHPLPRVNEIAYDVDDSPKAYYFQQAQNGLYARQAILCDVLGITLQDIL</sequence>
<accession>Q5LD54</accession>
<keyword id="KW-0665">Pyrimidine biosynthesis</keyword>
<keyword id="KW-0808">Transferase</keyword>
<reference key="1">
    <citation type="journal article" date="2005" name="Science">
        <title>Extensive DNA inversions in the B. fragilis genome control variable gene expression.</title>
        <authorList>
            <person name="Cerdeno-Tarraga A.-M."/>
            <person name="Patrick S."/>
            <person name="Crossman L.C."/>
            <person name="Blakely G."/>
            <person name="Abratt V."/>
            <person name="Lennard N."/>
            <person name="Poxton I."/>
            <person name="Duerden B."/>
            <person name="Harris B."/>
            <person name="Quail M.A."/>
            <person name="Barron A."/>
            <person name="Clark L."/>
            <person name="Corton C."/>
            <person name="Doggett J."/>
            <person name="Holden M.T.G."/>
            <person name="Larke N."/>
            <person name="Line A."/>
            <person name="Lord A."/>
            <person name="Norbertczak H."/>
            <person name="Ormond D."/>
            <person name="Price C."/>
            <person name="Rabbinowitsch E."/>
            <person name="Woodward J."/>
            <person name="Barrell B.G."/>
            <person name="Parkhill J."/>
        </authorList>
    </citation>
    <scope>NUCLEOTIDE SEQUENCE [LARGE SCALE GENOMIC DNA]</scope>
    <source>
        <strain>ATCC 25285 / DSM 2151 / CCUG 4856 / JCM 11019 / LMG 10263 / NCTC 9343 / Onslow / VPI 2553 / EN-2</strain>
    </source>
</reference>
<proteinExistence type="inferred from homology"/>
<evidence type="ECO:0000255" key="1">
    <source>
        <dbReference type="HAMAP-Rule" id="MF_00001"/>
    </source>
</evidence>
<dbReference type="EC" id="2.1.3.2" evidence="1"/>
<dbReference type="EMBL" id="CR626927">
    <property type="protein sequence ID" value="CAH07956.1"/>
    <property type="molecule type" value="Genomic_DNA"/>
</dbReference>
<dbReference type="RefSeq" id="WP_005787548.1">
    <property type="nucleotide sequence ID" value="NZ_UFTH01000001.1"/>
</dbReference>
<dbReference type="SMR" id="Q5LD54"/>
<dbReference type="PaxDb" id="272559-BF9343_2175"/>
<dbReference type="GeneID" id="60370040"/>
<dbReference type="KEGG" id="bfs:BF9343_2175"/>
<dbReference type="eggNOG" id="COG0540">
    <property type="taxonomic scope" value="Bacteria"/>
</dbReference>
<dbReference type="HOGENOM" id="CLU_043846_1_2_10"/>
<dbReference type="UniPathway" id="UPA00070">
    <property type="reaction ID" value="UER00116"/>
</dbReference>
<dbReference type="Proteomes" id="UP000006731">
    <property type="component" value="Chromosome"/>
</dbReference>
<dbReference type="GO" id="GO:0005829">
    <property type="term" value="C:cytosol"/>
    <property type="evidence" value="ECO:0007669"/>
    <property type="project" value="TreeGrafter"/>
</dbReference>
<dbReference type="GO" id="GO:0016597">
    <property type="term" value="F:amino acid binding"/>
    <property type="evidence" value="ECO:0007669"/>
    <property type="project" value="InterPro"/>
</dbReference>
<dbReference type="GO" id="GO:0004070">
    <property type="term" value="F:aspartate carbamoyltransferase activity"/>
    <property type="evidence" value="ECO:0007669"/>
    <property type="project" value="UniProtKB-UniRule"/>
</dbReference>
<dbReference type="GO" id="GO:0006207">
    <property type="term" value="P:'de novo' pyrimidine nucleobase biosynthetic process"/>
    <property type="evidence" value="ECO:0007669"/>
    <property type="project" value="InterPro"/>
</dbReference>
<dbReference type="GO" id="GO:0044205">
    <property type="term" value="P:'de novo' UMP biosynthetic process"/>
    <property type="evidence" value="ECO:0007669"/>
    <property type="project" value="UniProtKB-UniRule"/>
</dbReference>
<dbReference type="GO" id="GO:0006520">
    <property type="term" value="P:amino acid metabolic process"/>
    <property type="evidence" value="ECO:0007669"/>
    <property type="project" value="InterPro"/>
</dbReference>
<dbReference type="FunFam" id="3.40.50.1370:FF:000001">
    <property type="entry name" value="Aspartate carbamoyltransferase"/>
    <property type="match status" value="1"/>
</dbReference>
<dbReference type="FunFam" id="3.40.50.1370:FF:000002">
    <property type="entry name" value="Aspartate carbamoyltransferase 2"/>
    <property type="match status" value="1"/>
</dbReference>
<dbReference type="Gene3D" id="3.40.50.1370">
    <property type="entry name" value="Aspartate/ornithine carbamoyltransferase"/>
    <property type="match status" value="2"/>
</dbReference>
<dbReference type="HAMAP" id="MF_00001">
    <property type="entry name" value="Asp_carb_tr"/>
    <property type="match status" value="1"/>
</dbReference>
<dbReference type="InterPro" id="IPR006132">
    <property type="entry name" value="Asp/Orn_carbamoyltranf_P-bd"/>
</dbReference>
<dbReference type="InterPro" id="IPR006130">
    <property type="entry name" value="Asp/Orn_carbamoylTrfase"/>
</dbReference>
<dbReference type="InterPro" id="IPR036901">
    <property type="entry name" value="Asp/Orn_carbamoylTrfase_sf"/>
</dbReference>
<dbReference type="InterPro" id="IPR002082">
    <property type="entry name" value="Asp_carbamoyltransf"/>
</dbReference>
<dbReference type="InterPro" id="IPR006131">
    <property type="entry name" value="Asp_carbamoyltransf_Asp/Orn-bd"/>
</dbReference>
<dbReference type="NCBIfam" id="TIGR00670">
    <property type="entry name" value="asp_carb_tr"/>
    <property type="match status" value="1"/>
</dbReference>
<dbReference type="NCBIfam" id="NF002032">
    <property type="entry name" value="PRK00856.1"/>
    <property type="match status" value="1"/>
</dbReference>
<dbReference type="PANTHER" id="PTHR45753:SF6">
    <property type="entry name" value="ASPARTATE CARBAMOYLTRANSFERASE"/>
    <property type="match status" value="1"/>
</dbReference>
<dbReference type="PANTHER" id="PTHR45753">
    <property type="entry name" value="ORNITHINE CARBAMOYLTRANSFERASE, MITOCHONDRIAL"/>
    <property type="match status" value="1"/>
</dbReference>
<dbReference type="Pfam" id="PF00185">
    <property type="entry name" value="OTCace"/>
    <property type="match status" value="1"/>
</dbReference>
<dbReference type="Pfam" id="PF02729">
    <property type="entry name" value="OTCace_N"/>
    <property type="match status" value="1"/>
</dbReference>
<dbReference type="PRINTS" id="PR00100">
    <property type="entry name" value="AOTCASE"/>
</dbReference>
<dbReference type="PRINTS" id="PR00101">
    <property type="entry name" value="ATCASE"/>
</dbReference>
<dbReference type="SUPFAM" id="SSF53671">
    <property type="entry name" value="Aspartate/ornithine carbamoyltransferase"/>
    <property type="match status" value="1"/>
</dbReference>
<dbReference type="PROSITE" id="PS00097">
    <property type="entry name" value="CARBAMOYLTRANSFERASE"/>
    <property type="match status" value="1"/>
</dbReference>
<protein>
    <recommendedName>
        <fullName evidence="1">Aspartate carbamoyltransferase catalytic subunit</fullName>
        <ecNumber evidence="1">2.1.3.2</ecNumber>
    </recommendedName>
    <alternativeName>
        <fullName evidence="1">Aspartate transcarbamylase</fullName>
        <shortName evidence="1">ATCase</shortName>
    </alternativeName>
</protein>
<comment type="function">
    <text evidence="1">Catalyzes the condensation of carbamoyl phosphate and aspartate to form carbamoyl aspartate and inorganic phosphate, the committed step in the de novo pyrimidine nucleotide biosynthesis pathway.</text>
</comment>
<comment type="catalytic activity">
    <reaction evidence="1">
        <text>carbamoyl phosphate + L-aspartate = N-carbamoyl-L-aspartate + phosphate + H(+)</text>
        <dbReference type="Rhea" id="RHEA:20013"/>
        <dbReference type="ChEBI" id="CHEBI:15378"/>
        <dbReference type="ChEBI" id="CHEBI:29991"/>
        <dbReference type="ChEBI" id="CHEBI:32814"/>
        <dbReference type="ChEBI" id="CHEBI:43474"/>
        <dbReference type="ChEBI" id="CHEBI:58228"/>
        <dbReference type="EC" id="2.1.3.2"/>
    </reaction>
</comment>
<comment type="pathway">
    <text evidence="1">Pyrimidine metabolism; UMP biosynthesis via de novo pathway; (S)-dihydroorotate from bicarbonate: step 2/3.</text>
</comment>
<comment type="subunit">
    <text evidence="1">Heterododecamer (2C3:3R2) of six catalytic PyrB chains organized as two trimers (C3), and six regulatory PyrI chains organized as three dimers (R2).</text>
</comment>
<comment type="similarity">
    <text evidence="1">Belongs to the aspartate/ornithine carbamoyltransferase superfamily. ATCase family.</text>
</comment>
<organism>
    <name type="scientific">Bacteroides fragilis (strain ATCC 25285 / DSM 2151 / CCUG 4856 / JCM 11019 / LMG 10263 / NCTC 9343 / Onslow / VPI 2553 / EN-2)</name>
    <dbReference type="NCBI Taxonomy" id="272559"/>
    <lineage>
        <taxon>Bacteria</taxon>
        <taxon>Pseudomonadati</taxon>
        <taxon>Bacteroidota</taxon>
        <taxon>Bacteroidia</taxon>
        <taxon>Bacteroidales</taxon>
        <taxon>Bacteroidaceae</taxon>
        <taxon>Bacteroides</taxon>
    </lineage>
</organism>
<name>PYRB_BACFN</name>
<feature type="chain" id="PRO_0000301554" description="Aspartate carbamoyltransferase catalytic subunit">
    <location>
        <begin position="1"/>
        <end position="308"/>
    </location>
</feature>
<feature type="binding site" evidence="1">
    <location>
        <position position="51"/>
    </location>
    <ligand>
        <name>carbamoyl phosphate</name>
        <dbReference type="ChEBI" id="CHEBI:58228"/>
    </ligand>
</feature>
<feature type="binding site" evidence="1">
    <location>
        <position position="52"/>
    </location>
    <ligand>
        <name>carbamoyl phosphate</name>
        <dbReference type="ChEBI" id="CHEBI:58228"/>
    </ligand>
</feature>
<feature type="binding site" evidence="1">
    <location>
        <position position="80"/>
    </location>
    <ligand>
        <name>L-aspartate</name>
        <dbReference type="ChEBI" id="CHEBI:29991"/>
    </ligand>
</feature>
<feature type="binding site" evidence="1">
    <location>
        <position position="101"/>
    </location>
    <ligand>
        <name>carbamoyl phosphate</name>
        <dbReference type="ChEBI" id="CHEBI:58228"/>
    </ligand>
</feature>
<feature type="binding site" evidence="1">
    <location>
        <position position="129"/>
    </location>
    <ligand>
        <name>carbamoyl phosphate</name>
        <dbReference type="ChEBI" id="CHEBI:58228"/>
    </ligand>
</feature>
<feature type="binding site" evidence="1">
    <location>
        <position position="132"/>
    </location>
    <ligand>
        <name>carbamoyl phosphate</name>
        <dbReference type="ChEBI" id="CHEBI:58228"/>
    </ligand>
</feature>
<feature type="binding site" evidence="1">
    <location>
        <position position="162"/>
    </location>
    <ligand>
        <name>L-aspartate</name>
        <dbReference type="ChEBI" id="CHEBI:29991"/>
    </ligand>
</feature>
<feature type="binding site" evidence="1">
    <location>
        <position position="224"/>
    </location>
    <ligand>
        <name>L-aspartate</name>
        <dbReference type="ChEBI" id="CHEBI:29991"/>
    </ligand>
</feature>
<feature type="binding site" evidence="1">
    <location>
        <position position="263"/>
    </location>
    <ligand>
        <name>carbamoyl phosphate</name>
        <dbReference type="ChEBI" id="CHEBI:58228"/>
    </ligand>
</feature>
<feature type="binding site" evidence="1">
    <location>
        <position position="264"/>
    </location>
    <ligand>
        <name>carbamoyl phosphate</name>
        <dbReference type="ChEBI" id="CHEBI:58228"/>
    </ligand>
</feature>
<gene>
    <name evidence="1" type="primary">pyrB</name>
    <name type="ordered locus">BF2262</name>
</gene>